<comment type="function">
    <text evidence="1">Endoribonuclease that initiates mRNA decay.</text>
</comment>
<comment type="subcellular location">
    <subcellularLocation>
        <location evidence="1">Cell membrane</location>
        <topology evidence="1">Single-pass membrane protein</topology>
    </subcellularLocation>
</comment>
<comment type="similarity">
    <text evidence="1">Belongs to the RNase Y family.</text>
</comment>
<protein>
    <recommendedName>
        <fullName evidence="1">Ribonuclease Y</fullName>
        <shortName evidence="1">RNase Y</shortName>
        <ecNumber evidence="1">3.1.-.-</ecNumber>
    </recommendedName>
</protein>
<sequence>MKGDYWRTHCIMDCSLLVFALICGSIIGYFLYSFFNQKKLEEKKQAFDDKLKEKEKDLQQREQEMMRNAKIEITSLRQKLELDLEQRTNTIVDLESKNNRREELFNNRTESLNKREEHLDSEQQIISHTKKNLEQQIKEQETILNTQKQQLEKIASLTQDQARQIIMKETRDQTTYEMMSYIKQEEEKAKSEASKKAKTLLVLAMQKYAGDITGEKNISVVNIPNEDMKGRIIGRQGRNIKSLEVLTGVDLIIDESPCTIILSSFDPIRREIAKKTLEFLVSDGRIHPSRIEKALETSTIEVDNFIKEMGEEAAFITKIGEVHPDLIKILGKLHFRISYSQNVLKHSLEVAFLAGKLASEIGENEILARRAGLFHDIGKALDHEMEGSHVEIGVFIASKYKEKKEVIDAIASHHEDQEPQSIIAVLVAIADTLSSARPGARKESVENYIQRLTKLETIANATEGVAKSYAIQAGREIRVIVEPDKIADNFIFQTARTIKEQIEKDISYNGVIKVTVIRETRAVEMAKL</sequence>
<dbReference type="EC" id="3.1.-.-" evidence="1"/>
<dbReference type="EMBL" id="AP006628">
    <property type="protein sequence ID" value="BAD04357.1"/>
    <property type="molecule type" value="Genomic_DNA"/>
</dbReference>
<dbReference type="SMR" id="Q6YQV1"/>
<dbReference type="STRING" id="262768.PAM_272"/>
<dbReference type="KEGG" id="poy:PAM_272"/>
<dbReference type="eggNOG" id="COG1418">
    <property type="taxonomic scope" value="Bacteria"/>
</dbReference>
<dbReference type="HOGENOM" id="CLU_028328_1_0_14"/>
<dbReference type="BioCyc" id="OYEL262768:G1G26-331-MONOMER"/>
<dbReference type="Proteomes" id="UP000002523">
    <property type="component" value="Chromosome"/>
</dbReference>
<dbReference type="GO" id="GO:0005886">
    <property type="term" value="C:plasma membrane"/>
    <property type="evidence" value="ECO:0007669"/>
    <property type="project" value="UniProtKB-SubCell"/>
</dbReference>
<dbReference type="GO" id="GO:0003723">
    <property type="term" value="F:RNA binding"/>
    <property type="evidence" value="ECO:0007669"/>
    <property type="project" value="UniProtKB-UniRule"/>
</dbReference>
<dbReference type="GO" id="GO:0004521">
    <property type="term" value="F:RNA endonuclease activity"/>
    <property type="evidence" value="ECO:0007669"/>
    <property type="project" value="UniProtKB-UniRule"/>
</dbReference>
<dbReference type="GO" id="GO:0006402">
    <property type="term" value="P:mRNA catabolic process"/>
    <property type="evidence" value="ECO:0007669"/>
    <property type="project" value="UniProtKB-UniRule"/>
</dbReference>
<dbReference type="CDD" id="cd00077">
    <property type="entry name" value="HDc"/>
    <property type="match status" value="1"/>
</dbReference>
<dbReference type="CDD" id="cd22431">
    <property type="entry name" value="KH-I_RNaseY"/>
    <property type="match status" value="1"/>
</dbReference>
<dbReference type="Gene3D" id="1.10.3210.10">
    <property type="entry name" value="Hypothetical protein af1432"/>
    <property type="match status" value="1"/>
</dbReference>
<dbReference type="Gene3D" id="3.30.1370.10">
    <property type="entry name" value="K Homology domain, type 1"/>
    <property type="match status" value="1"/>
</dbReference>
<dbReference type="HAMAP" id="MF_00335">
    <property type="entry name" value="RNase_Y"/>
    <property type="match status" value="1"/>
</dbReference>
<dbReference type="InterPro" id="IPR003607">
    <property type="entry name" value="HD/PDEase_dom"/>
</dbReference>
<dbReference type="InterPro" id="IPR006674">
    <property type="entry name" value="HD_domain"/>
</dbReference>
<dbReference type="InterPro" id="IPR006675">
    <property type="entry name" value="HDIG_dom"/>
</dbReference>
<dbReference type="InterPro" id="IPR004087">
    <property type="entry name" value="KH_dom"/>
</dbReference>
<dbReference type="InterPro" id="IPR004088">
    <property type="entry name" value="KH_dom_type_1"/>
</dbReference>
<dbReference type="InterPro" id="IPR036612">
    <property type="entry name" value="KH_dom_type_1_sf"/>
</dbReference>
<dbReference type="InterPro" id="IPR017705">
    <property type="entry name" value="Ribonuclease_Y"/>
</dbReference>
<dbReference type="InterPro" id="IPR022711">
    <property type="entry name" value="RNase_Y_N"/>
</dbReference>
<dbReference type="NCBIfam" id="TIGR00277">
    <property type="entry name" value="HDIG"/>
    <property type="match status" value="1"/>
</dbReference>
<dbReference type="NCBIfam" id="TIGR03319">
    <property type="entry name" value="RNase_Y"/>
    <property type="match status" value="1"/>
</dbReference>
<dbReference type="PANTHER" id="PTHR12826">
    <property type="entry name" value="RIBONUCLEASE Y"/>
    <property type="match status" value="1"/>
</dbReference>
<dbReference type="PANTHER" id="PTHR12826:SF15">
    <property type="entry name" value="RIBONUCLEASE Y"/>
    <property type="match status" value="1"/>
</dbReference>
<dbReference type="Pfam" id="PF01966">
    <property type="entry name" value="HD"/>
    <property type="match status" value="1"/>
</dbReference>
<dbReference type="Pfam" id="PF00013">
    <property type="entry name" value="KH_1"/>
    <property type="match status" value="1"/>
</dbReference>
<dbReference type="Pfam" id="PF12072">
    <property type="entry name" value="RNase_Y_N"/>
    <property type="match status" value="1"/>
</dbReference>
<dbReference type="SMART" id="SM00471">
    <property type="entry name" value="HDc"/>
    <property type="match status" value="1"/>
</dbReference>
<dbReference type="SMART" id="SM00322">
    <property type="entry name" value="KH"/>
    <property type="match status" value="1"/>
</dbReference>
<dbReference type="SUPFAM" id="SSF54791">
    <property type="entry name" value="Eukaryotic type KH-domain (KH-domain type I)"/>
    <property type="match status" value="1"/>
</dbReference>
<dbReference type="SUPFAM" id="SSF109604">
    <property type="entry name" value="HD-domain/PDEase-like"/>
    <property type="match status" value="1"/>
</dbReference>
<dbReference type="PROSITE" id="PS51831">
    <property type="entry name" value="HD"/>
    <property type="match status" value="1"/>
</dbReference>
<dbReference type="PROSITE" id="PS50084">
    <property type="entry name" value="KH_TYPE_1"/>
    <property type="match status" value="1"/>
</dbReference>
<reference key="1">
    <citation type="journal article" date="2004" name="Nat. Genet.">
        <title>Reductive evolution suggested from the complete genome sequence of a plant-pathogenic phytoplasma.</title>
        <authorList>
            <person name="Oshima K."/>
            <person name="Kakizawa S."/>
            <person name="Nishigawa H."/>
            <person name="Jung H.-Y."/>
            <person name="Wei W."/>
            <person name="Suzuki S."/>
            <person name="Arashida R."/>
            <person name="Nakata D."/>
            <person name="Miyata S."/>
            <person name="Ugaki M."/>
            <person name="Namba S."/>
        </authorList>
    </citation>
    <scope>NUCLEOTIDE SEQUENCE [LARGE SCALE GENOMIC DNA]</scope>
    <source>
        <strain>OY-M</strain>
    </source>
</reference>
<feature type="chain" id="PRO_0000344913" description="Ribonuclease Y">
    <location>
        <begin position="1"/>
        <end position="528"/>
    </location>
</feature>
<feature type="transmembrane region" description="Helical" evidence="1">
    <location>
        <begin position="15"/>
        <end position="35"/>
    </location>
</feature>
<feature type="domain" description="KH" evidence="1">
    <location>
        <begin position="217"/>
        <end position="277"/>
    </location>
</feature>
<feature type="domain" description="HD" evidence="2">
    <location>
        <begin position="343"/>
        <end position="436"/>
    </location>
</feature>
<keyword id="KW-1003">Cell membrane</keyword>
<keyword id="KW-0255">Endonuclease</keyword>
<keyword id="KW-0378">Hydrolase</keyword>
<keyword id="KW-0472">Membrane</keyword>
<keyword id="KW-0540">Nuclease</keyword>
<keyword id="KW-0694">RNA-binding</keyword>
<keyword id="KW-0812">Transmembrane</keyword>
<keyword id="KW-1133">Transmembrane helix</keyword>
<evidence type="ECO:0000255" key="1">
    <source>
        <dbReference type="HAMAP-Rule" id="MF_00335"/>
    </source>
</evidence>
<evidence type="ECO:0000255" key="2">
    <source>
        <dbReference type="PROSITE-ProRule" id="PRU01175"/>
    </source>
</evidence>
<gene>
    <name evidence="1" type="primary">rny</name>
    <name type="ordered locus">PAM_272</name>
</gene>
<name>RNY_ONYPE</name>
<organism>
    <name type="scientific">Onion yellows phytoplasma (strain OY-M)</name>
    <dbReference type="NCBI Taxonomy" id="262768"/>
    <lineage>
        <taxon>Bacteria</taxon>
        <taxon>Bacillati</taxon>
        <taxon>Mycoplasmatota</taxon>
        <taxon>Mollicutes</taxon>
        <taxon>Acholeplasmatales</taxon>
        <taxon>Acholeplasmataceae</taxon>
        <taxon>Candidatus Phytoplasma</taxon>
        <taxon>16SrI (Aster yellows group)</taxon>
    </lineage>
</organism>
<proteinExistence type="inferred from homology"/>
<accession>Q6YQV1</accession>